<name>MED27_MOUSE</name>
<sequence length="311" mass="35298">MADVLSVGVNLEAFSQAISAIQALRSSVSRVFDCLKDGMRNKETLEGREKAFIANFQDNLHSVNRDLNELERLSNLVGKPSENHPLHNSGLLSLDPVQDKTPLYSQLLQAYKWSNKLQYHAGLASGLLNQQSLKRSANQMGVSAKRRPKAQPTTLVLPPQYVDDVISRIDRMFPEMSIHLSRPNGTSAMLLVTLGKVLKVIVVMRSLFIDRTIVKGYNESVYTEDGKLDIWSKSSYQVFQKVTDHATTALLHYQLPQMPDVVVRSFMTWLRSYIKLFQAPCQRCGKFLQDGLPPTWRDFRTLEAFHDTCRQ</sequence>
<accession>Q9DB40</accession>
<accession>A2AJV2</accession>
<accession>Q78JI3</accession>
<accession>Q9D707</accession>
<proteinExistence type="evidence at protein level"/>
<organism>
    <name type="scientific">Mus musculus</name>
    <name type="common">Mouse</name>
    <dbReference type="NCBI Taxonomy" id="10090"/>
    <lineage>
        <taxon>Eukaryota</taxon>
        <taxon>Metazoa</taxon>
        <taxon>Chordata</taxon>
        <taxon>Craniata</taxon>
        <taxon>Vertebrata</taxon>
        <taxon>Euteleostomi</taxon>
        <taxon>Mammalia</taxon>
        <taxon>Eutheria</taxon>
        <taxon>Euarchontoglires</taxon>
        <taxon>Glires</taxon>
        <taxon>Rodentia</taxon>
        <taxon>Myomorpha</taxon>
        <taxon>Muroidea</taxon>
        <taxon>Muridae</taxon>
        <taxon>Murinae</taxon>
        <taxon>Mus</taxon>
        <taxon>Mus</taxon>
    </lineage>
</organism>
<comment type="function">
    <text evidence="1">Component of the Mediator complex, a coactivator involved in the regulated transcription of nearly all RNA polymerase II-dependent genes. Mediator functions as a bridge to convey information from gene-specific regulatory proteins to the basal RNA polymerase II transcription machinery. Mediator is recruited to promoters by direct interactions with regulatory proteins and serves as a scaffold for the assembly of a functional preinitiation complex with RNA polymerase II and the general transcription factors (By similarity).</text>
</comment>
<comment type="subunit">
    <text evidence="1">Component of the Mediator complex, which is composed of MED1, MED4, MED6, MED7, MED8, MED9, MED10, MED11, MED12, MED13, MED13L, MED14, MED15, MED16, MED17, MED18, MED19, MED20, MED21, MED22, MED23, MED24, MED25, MED26, MED27, MED29, MED30, MED31, CCNC, CDK8 and CDC2L6/CDK11. The MED12, MED13, CCNC and CDK8 subunits form a distinct module termed the CDK8 module. Mediator containing the CDK8 module is less active than Mediator lacking this module in supporting transcriptional activation. Individual preparations of the Mediator complex lacking one or more distinct subunits have been variously termed ARC, CRSP, DRIP, PC2, SMCC and TRAP (By similarity).</text>
</comment>
<comment type="subcellular location">
    <subcellularLocation>
        <location evidence="1">Nucleus</location>
    </subcellularLocation>
</comment>
<comment type="alternative products">
    <event type="alternative splicing"/>
    <isoform>
        <id>Q9DB40-1</id>
        <name evidence="4">1</name>
        <sequence type="displayed"/>
    </isoform>
    <isoform>
        <id>Q9DB40-2</id>
        <name evidence="4">2</name>
        <sequence type="described" ref="VSP_051870 VSP_051871"/>
    </isoform>
</comment>
<comment type="similarity">
    <text evidence="4">Belongs to the Mediator complex subunit 27 family.</text>
</comment>
<comment type="sequence caution" evidence="4">
    <conflict type="erroneous initiation">
        <sequence resource="EMBL-CDS" id="AAH16537"/>
    </conflict>
</comment>
<reference evidence="4 6" key="1">
    <citation type="journal article" date="2005" name="Science">
        <title>The transcriptional landscape of the mammalian genome.</title>
        <authorList>
            <person name="Carninci P."/>
            <person name="Kasukawa T."/>
            <person name="Katayama S."/>
            <person name="Gough J."/>
            <person name="Frith M.C."/>
            <person name="Maeda N."/>
            <person name="Oyama R."/>
            <person name="Ravasi T."/>
            <person name="Lenhard B."/>
            <person name="Wells C."/>
            <person name="Kodzius R."/>
            <person name="Shimokawa K."/>
            <person name="Bajic V.B."/>
            <person name="Brenner S.E."/>
            <person name="Batalov S."/>
            <person name="Forrest A.R."/>
            <person name="Zavolan M."/>
            <person name="Davis M.J."/>
            <person name="Wilming L.G."/>
            <person name="Aidinis V."/>
            <person name="Allen J.E."/>
            <person name="Ambesi-Impiombato A."/>
            <person name="Apweiler R."/>
            <person name="Aturaliya R.N."/>
            <person name="Bailey T.L."/>
            <person name="Bansal M."/>
            <person name="Baxter L."/>
            <person name="Beisel K.W."/>
            <person name="Bersano T."/>
            <person name="Bono H."/>
            <person name="Chalk A.M."/>
            <person name="Chiu K.P."/>
            <person name="Choudhary V."/>
            <person name="Christoffels A."/>
            <person name="Clutterbuck D.R."/>
            <person name="Crowe M.L."/>
            <person name="Dalla E."/>
            <person name="Dalrymple B.P."/>
            <person name="de Bono B."/>
            <person name="Della Gatta G."/>
            <person name="di Bernardo D."/>
            <person name="Down T."/>
            <person name="Engstrom P."/>
            <person name="Fagiolini M."/>
            <person name="Faulkner G."/>
            <person name="Fletcher C.F."/>
            <person name="Fukushima T."/>
            <person name="Furuno M."/>
            <person name="Futaki S."/>
            <person name="Gariboldi M."/>
            <person name="Georgii-Hemming P."/>
            <person name="Gingeras T.R."/>
            <person name="Gojobori T."/>
            <person name="Green R.E."/>
            <person name="Gustincich S."/>
            <person name="Harbers M."/>
            <person name="Hayashi Y."/>
            <person name="Hensch T.K."/>
            <person name="Hirokawa N."/>
            <person name="Hill D."/>
            <person name="Huminiecki L."/>
            <person name="Iacono M."/>
            <person name="Ikeo K."/>
            <person name="Iwama A."/>
            <person name="Ishikawa T."/>
            <person name="Jakt M."/>
            <person name="Kanapin A."/>
            <person name="Katoh M."/>
            <person name="Kawasawa Y."/>
            <person name="Kelso J."/>
            <person name="Kitamura H."/>
            <person name="Kitano H."/>
            <person name="Kollias G."/>
            <person name="Krishnan S.P."/>
            <person name="Kruger A."/>
            <person name="Kummerfeld S.K."/>
            <person name="Kurochkin I.V."/>
            <person name="Lareau L.F."/>
            <person name="Lazarevic D."/>
            <person name="Lipovich L."/>
            <person name="Liu J."/>
            <person name="Liuni S."/>
            <person name="McWilliam S."/>
            <person name="Madan Babu M."/>
            <person name="Madera M."/>
            <person name="Marchionni L."/>
            <person name="Matsuda H."/>
            <person name="Matsuzawa S."/>
            <person name="Miki H."/>
            <person name="Mignone F."/>
            <person name="Miyake S."/>
            <person name="Morris K."/>
            <person name="Mottagui-Tabar S."/>
            <person name="Mulder N."/>
            <person name="Nakano N."/>
            <person name="Nakauchi H."/>
            <person name="Ng P."/>
            <person name="Nilsson R."/>
            <person name="Nishiguchi S."/>
            <person name="Nishikawa S."/>
            <person name="Nori F."/>
            <person name="Ohara O."/>
            <person name="Okazaki Y."/>
            <person name="Orlando V."/>
            <person name="Pang K.C."/>
            <person name="Pavan W.J."/>
            <person name="Pavesi G."/>
            <person name="Pesole G."/>
            <person name="Petrovsky N."/>
            <person name="Piazza S."/>
            <person name="Reed J."/>
            <person name="Reid J.F."/>
            <person name="Ring B.Z."/>
            <person name="Ringwald M."/>
            <person name="Rost B."/>
            <person name="Ruan Y."/>
            <person name="Salzberg S.L."/>
            <person name="Sandelin A."/>
            <person name="Schneider C."/>
            <person name="Schoenbach C."/>
            <person name="Sekiguchi K."/>
            <person name="Semple C.A."/>
            <person name="Seno S."/>
            <person name="Sessa L."/>
            <person name="Sheng Y."/>
            <person name="Shibata Y."/>
            <person name="Shimada H."/>
            <person name="Shimada K."/>
            <person name="Silva D."/>
            <person name="Sinclair B."/>
            <person name="Sperling S."/>
            <person name="Stupka E."/>
            <person name="Sugiura K."/>
            <person name="Sultana R."/>
            <person name="Takenaka Y."/>
            <person name="Taki K."/>
            <person name="Tammoja K."/>
            <person name="Tan S.L."/>
            <person name="Tang S."/>
            <person name="Taylor M.S."/>
            <person name="Tegner J."/>
            <person name="Teichmann S.A."/>
            <person name="Ueda H.R."/>
            <person name="van Nimwegen E."/>
            <person name="Verardo R."/>
            <person name="Wei C.L."/>
            <person name="Yagi K."/>
            <person name="Yamanishi H."/>
            <person name="Zabarovsky E."/>
            <person name="Zhu S."/>
            <person name="Zimmer A."/>
            <person name="Hide W."/>
            <person name="Bult C."/>
            <person name="Grimmond S.M."/>
            <person name="Teasdale R.D."/>
            <person name="Liu E.T."/>
            <person name="Brusic V."/>
            <person name="Quackenbush J."/>
            <person name="Wahlestedt C."/>
            <person name="Mattick J.S."/>
            <person name="Hume D.A."/>
            <person name="Kai C."/>
            <person name="Sasaki D."/>
            <person name="Tomaru Y."/>
            <person name="Fukuda S."/>
            <person name="Kanamori-Katayama M."/>
            <person name="Suzuki M."/>
            <person name="Aoki J."/>
            <person name="Arakawa T."/>
            <person name="Iida J."/>
            <person name="Imamura K."/>
            <person name="Itoh M."/>
            <person name="Kato T."/>
            <person name="Kawaji H."/>
            <person name="Kawagashira N."/>
            <person name="Kawashima T."/>
            <person name="Kojima M."/>
            <person name="Kondo S."/>
            <person name="Konno H."/>
            <person name="Nakano K."/>
            <person name="Ninomiya N."/>
            <person name="Nishio T."/>
            <person name="Okada M."/>
            <person name="Plessy C."/>
            <person name="Shibata K."/>
            <person name="Shiraki T."/>
            <person name="Suzuki S."/>
            <person name="Tagami M."/>
            <person name="Waki K."/>
            <person name="Watahiki A."/>
            <person name="Okamura-Oho Y."/>
            <person name="Suzuki H."/>
            <person name="Kawai J."/>
            <person name="Hayashizaki Y."/>
        </authorList>
    </citation>
    <scope>NUCLEOTIDE SEQUENCE [LARGE SCALE MRNA] (ISOFORMS 1 AND 2)</scope>
    <source>
        <strain>C57BL/6J</strain>
        <tissue>Cerebellum</tissue>
        <tissue evidence="7">Heart</tissue>
        <tissue evidence="6">Tongue</tissue>
    </source>
</reference>
<reference key="2">
    <citation type="journal article" date="2009" name="PLoS Biol.">
        <title>Lineage-specific biology revealed by a finished genome assembly of the mouse.</title>
        <authorList>
            <person name="Church D.M."/>
            <person name="Goodstadt L."/>
            <person name="Hillier L.W."/>
            <person name="Zody M.C."/>
            <person name="Goldstein S."/>
            <person name="She X."/>
            <person name="Bult C.J."/>
            <person name="Agarwala R."/>
            <person name="Cherry J.L."/>
            <person name="DiCuccio M."/>
            <person name="Hlavina W."/>
            <person name="Kapustin Y."/>
            <person name="Meric P."/>
            <person name="Maglott D."/>
            <person name="Birtle Z."/>
            <person name="Marques A.C."/>
            <person name="Graves T."/>
            <person name="Zhou S."/>
            <person name="Teague B."/>
            <person name="Potamousis K."/>
            <person name="Churas C."/>
            <person name="Place M."/>
            <person name="Herschleb J."/>
            <person name="Runnheim R."/>
            <person name="Forrest D."/>
            <person name="Amos-Landgraf J."/>
            <person name="Schwartz D.C."/>
            <person name="Cheng Z."/>
            <person name="Lindblad-Toh K."/>
            <person name="Eichler E.E."/>
            <person name="Ponting C.P."/>
        </authorList>
    </citation>
    <scope>NUCLEOTIDE SEQUENCE [LARGE SCALE GENOMIC DNA]</scope>
    <source>
        <strain>C57BL/6J</strain>
    </source>
</reference>
<reference evidence="4 5" key="3">
    <citation type="journal article" date="2004" name="Genome Res.">
        <title>The status, quality, and expansion of the NIH full-length cDNA project: the Mammalian Gene Collection (MGC).</title>
        <authorList>
            <consortium name="The MGC Project Team"/>
        </authorList>
    </citation>
    <scope>NUCLEOTIDE SEQUENCE [LARGE SCALE MRNA] (ISOFORM 1)</scope>
    <source>
        <strain evidence="5">FVB/N</strain>
        <tissue evidence="5">Mammary gland</tissue>
    </source>
</reference>
<dbReference type="EMBL" id="AK005251">
    <property type="protein sequence ID" value="BAB23906.2"/>
    <property type="molecule type" value="mRNA"/>
</dbReference>
<dbReference type="EMBL" id="AK009764">
    <property type="protein sequence ID" value="BAB26488.2"/>
    <property type="molecule type" value="mRNA"/>
</dbReference>
<dbReference type="EMBL" id="AK147181">
    <property type="protein sequence ID" value="BAE27743.1"/>
    <property type="molecule type" value="mRNA"/>
</dbReference>
<dbReference type="EMBL" id="AL772213">
    <property type="status" value="NOT_ANNOTATED_CDS"/>
    <property type="molecule type" value="Genomic_DNA"/>
</dbReference>
<dbReference type="EMBL" id="AL929437">
    <property type="status" value="NOT_ANNOTATED_CDS"/>
    <property type="molecule type" value="Genomic_DNA"/>
</dbReference>
<dbReference type="EMBL" id="BC016537">
    <property type="protein sequence ID" value="AAH16537.1"/>
    <property type="status" value="ALT_INIT"/>
    <property type="molecule type" value="mRNA"/>
</dbReference>
<dbReference type="CCDS" id="CCDS15853.1">
    <molecule id="Q9DB40-1"/>
</dbReference>
<dbReference type="CCDS" id="CCDS71014.1">
    <molecule id="Q9DB40-2"/>
</dbReference>
<dbReference type="RefSeq" id="NP_001277419.1">
    <property type="nucleotide sequence ID" value="NM_001290490.1"/>
</dbReference>
<dbReference type="RefSeq" id="NP_081172.2">
    <molecule id="Q9DB40-1"/>
    <property type="nucleotide sequence ID" value="NM_026896.5"/>
</dbReference>
<dbReference type="RefSeq" id="NP_083891.1">
    <molecule id="Q9DB40-2"/>
    <property type="nucleotide sequence ID" value="NM_029615.1"/>
</dbReference>
<dbReference type="PDB" id="6W1S">
    <property type="method" value="EM"/>
    <property type="resolution" value="4.02 A"/>
    <property type="chains" value="V=8-304"/>
</dbReference>
<dbReference type="PDB" id="8T1I">
    <property type="method" value="EM"/>
    <property type="resolution" value="4.68 A"/>
    <property type="chains" value="V=1-311"/>
</dbReference>
<dbReference type="PDB" id="8T1L">
    <property type="method" value="EM"/>
    <property type="resolution" value="4.83 A"/>
    <property type="chains" value="V=1-311"/>
</dbReference>
<dbReference type="PDBsum" id="6W1S"/>
<dbReference type="PDBsum" id="8T1I"/>
<dbReference type="PDBsum" id="8T1L"/>
<dbReference type="EMDB" id="EMD-21514"/>
<dbReference type="EMDB" id="EMD-40968"/>
<dbReference type="EMDB" id="EMD-40971"/>
<dbReference type="SMR" id="Q9DB40"/>
<dbReference type="BioGRID" id="213151">
    <property type="interactions" value="2"/>
</dbReference>
<dbReference type="ComplexPortal" id="CPX-3264">
    <property type="entry name" value="Core mediator complex"/>
</dbReference>
<dbReference type="FunCoup" id="Q9DB40">
    <property type="interactions" value="3443"/>
</dbReference>
<dbReference type="IntAct" id="Q9DB40">
    <property type="interactions" value="3"/>
</dbReference>
<dbReference type="MINT" id="Q9DB40"/>
<dbReference type="STRING" id="10090.ENSMUSP00000028139"/>
<dbReference type="iPTMnet" id="Q9DB40"/>
<dbReference type="PhosphoSitePlus" id="Q9DB40"/>
<dbReference type="SwissPalm" id="Q9DB40"/>
<dbReference type="PaxDb" id="10090-ENSMUSP00000028139"/>
<dbReference type="PeptideAtlas" id="Q9DB40"/>
<dbReference type="ProteomicsDB" id="295989">
    <molecule id="Q9DB40-1"/>
</dbReference>
<dbReference type="ProteomicsDB" id="295990">
    <molecule id="Q9DB40-2"/>
</dbReference>
<dbReference type="Pumba" id="Q9DB40"/>
<dbReference type="Antibodypedia" id="1810">
    <property type="antibodies" value="152 antibodies from 27 providers"/>
</dbReference>
<dbReference type="DNASU" id="68975"/>
<dbReference type="Ensembl" id="ENSMUST00000028139.11">
    <molecule id="Q9DB40-1"/>
    <property type="protein sequence ID" value="ENSMUSP00000028139.5"/>
    <property type="gene ID" value="ENSMUSG00000026799.16"/>
</dbReference>
<dbReference type="Ensembl" id="ENSMUST00000113830.11">
    <molecule id="Q9DB40-2"/>
    <property type="protein sequence ID" value="ENSMUSP00000109461.5"/>
    <property type="gene ID" value="ENSMUSG00000026799.16"/>
</dbReference>
<dbReference type="GeneID" id="68975"/>
<dbReference type="KEGG" id="mmu:68975"/>
<dbReference type="UCSC" id="uc008izr.2">
    <molecule id="Q9DB40-2"/>
    <property type="organism name" value="mouse"/>
</dbReference>
<dbReference type="UCSC" id="uc008izs.2">
    <molecule id="Q9DB40-1"/>
    <property type="organism name" value="mouse"/>
</dbReference>
<dbReference type="AGR" id="MGI:1916225"/>
<dbReference type="CTD" id="9442"/>
<dbReference type="MGI" id="MGI:1916225">
    <property type="gene designation" value="Med27"/>
</dbReference>
<dbReference type="VEuPathDB" id="HostDB:ENSMUSG00000026799"/>
<dbReference type="eggNOG" id="ENOG502QS6H">
    <property type="taxonomic scope" value="Eukaryota"/>
</dbReference>
<dbReference type="GeneTree" id="ENSGT00390000012207"/>
<dbReference type="HOGENOM" id="CLU_056015_0_0_1"/>
<dbReference type="InParanoid" id="Q9DB40"/>
<dbReference type="OMA" id="FHEDCRN"/>
<dbReference type="OrthoDB" id="1868004at2759"/>
<dbReference type="PhylomeDB" id="Q9DB40"/>
<dbReference type="TreeFam" id="TF323728"/>
<dbReference type="BioGRID-ORCS" id="68975">
    <property type="hits" value="17 hits in 77 CRISPR screens"/>
</dbReference>
<dbReference type="ChiTaRS" id="Med27">
    <property type="organism name" value="mouse"/>
</dbReference>
<dbReference type="PRO" id="PR:Q9DB40"/>
<dbReference type="Proteomes" id="UP000000589">
    <property type="component" value="Chromosome 2"/>
</dbReference>
<dbReference type="RNAct" id="Q9DB40">
    <property type="molecule type" value="protein"/>
</dbReference>
<dbReference type="Bgee" id="ENSMUSG00000026799">
    <property type="expression patterns" value="Expressed in animal zygote and 237 other cell types or tissues"/>
</dbReference>
<dbReference type="ExpressionAtlas" id="Q9DB40">
    <property type="expression patterns" value="baseline and differential"/>
</dbReference>
<dbReference type="GO" id="GO:0070847">
    <property type="term" value="C:core mediator complex"/>
    <property type="evidence" value="ECO:0000266"/>
    <property type="project" value="ComplexPortal"/>
</dbReference>
<dbReference type="GO" id="GO:0005829">
    <property type="term" value="C:cytosol"/>
    <property type="evidence" value="ECO:0007669"/>
    <property type="project" value="Ensembl"/>
</dbReference>
<dbReference type="GO" id="GO:0016592">
    <property type="term" value="C:mediator complex"/>
    <property type="evidence" value="ECO:0000314"/>
    <property type="project" value="MGI"/>
</dbReference>
<dbReference type="GO" id="GO:0005730">
    <property type="term" value="C:nucleolus"/>
    <property type="evidence" value="ECO:0007669"/>
    <property type="project" value="Ensembl"/>
</dbReference>
<dbReference type="GO" id="GO:0005654">
    <property type="term" value="C:nucleoplasm"/>
    <property type="evidence" value="ECO:0000304"/>
    <property type="project" value="Reactome"/>
</dbReference>
<dbReference type="GO" id="GO:0005634">
    <property type="term" value="C:nucleus"/>
    <property type="evidence" value="ECO:0000250"/>
    <property type="project" value="UniProtKB"/>
</dbReference>
<dbReference type="GO" id="GO:0005667">
    <property type="term" value="C:transcription regulator complex"/>
    <property type="evidence" value="ECO:0000266"/>
    <property type="project" value="MGI"/>
</dbReference>
<dbReference type="GO" id="GO:0000151">
    <property type="term" value="C:ubiquitin ligase complex"/>
    <property type="evidence" value="ECO:0007669"/>
    <property type="project" value="Ensembl"/>
</dbReference>
<dbReference type="GO" id="GO:0003713">
    <property type="term" value="F:transcription coactivator activity"/>
    <property type="evidence" value="ECO:0000250"/>
    <property type="project" value="UniProtKB"/>
</dbReference>
<dbReference type="GO" id="GO:0061630">
    <property type="term" value="F:ubiquitin protein ligase activity"/>
    <property type="evidence" value="ECO:0007669"/>
    <property type="project" value="Ensembl"/>
</dbReference>
<dbReference type="GO" id="GO:0032968">
    <property type="term" value="P:positive regulation of transcription elongation by RNA polymerase II"/>
    <property type="evidence" value="ECO:0000303"/>
    <property type="project" value="ComplexPortal"/>
</dbReference>
<dbReference type="GO" id="GO:0060261">
    <property type="term" value="P:positive regulation of transcription initiation by RNA polymerase II"/>
    <property type="evidence" value="ECO:0000303"/>
    <property type="project" value="ComplexPortal"/>
</dbReference>
<dbReference type="GO" id="GO:0016567">
    <property type="term" value="P:protein ubiquitination"/>
    <property type="evidence" value="ECO:0007669"/>
    <property type="project" value="Ensembl"/>
</dbReference>
<dbReference type="GO" id="GO:0006357">
    <property type="term" value="P:regulation of transcription by RNA polymerase II"/>
    <property type="evidence" value="ECO:0000266"/>
    <property type="project" value="MGI"/>
</dbReference>
<dbReference type="GO" id="GO:0051123">
    <property type="term" value="P:RNA polymerase II preinitiation complex assembly"/>
    <property type="evidence" value="ECO:0000303"/>
    <property type="project" value="ComplexPortal"/>
</dbReference>
<dbReference type="GO" id="GO:0035019">
    <property type="term" value="P:somatic stem cell population maintenance"/>
    <property type="evidence" value="ECO:0000315"/>
    <property type="project" value="MGI"/>
</dbReference>
<dbReference type="InterPro" id="IPR021627">
    <property type="entry name" value="Mediator_Med27"/>
</dbReference>
<dbReference type="PANTHER" id="PTHR13130">
    <property type="entry name" value="34 KDA TRANSCRIPTIONAL CO-ACTIVATOR-RELATED"/>
    <property type="match status" value="1"/>
</dbReference>
<dbReference type="PANTHER" id="PTHR13130:SF4">
    <property type="entry name" value="MEDIATOR OF RNA POLYMERASE II TRANSCRIPTION SUBUNIT 27"/>
    <property type="match status" value="1"/>
</dbReference>
<dbReference type="Pfam" id="PF11571">
    <property type="entry name" value="Med27"/>
    <property type="match status" value="1"/>
</dbReference>
<feature type="chain" id="PRO_0000079362" description="Mediator of RNA polymerase II transcription subunit 27">
    <location>
        <begin position="1"/>
        <end position="311"/>
    </location>
</feature>
<feature type="modified residue" description="Phosphoserine" evidence="2">
    <location>
        <position position="132"/>
    </location>
</feature>
<feature type="modified residue" description="N6-methyllysine" evidence="2">
    <location>
        <position position="134"/>
    </location>
</feature>
<feature type="splice variant" id="VSP_051870" description="In isoform 2." evidence="3">
    <original>VTLGKVLKVIVVMRSLF</original>
    <variation>ILINSSAQSITGPWFWS</variation>
    <location>
        <begin position="192"/>
        <end position="208"/>
    </location>
</feature>
<feature type="splice variant" id="VSP_051871" description="In isoform 2." evidence="3">
    <location>
        <begin position="209"/>
        <end position="311"/>
    </location>
</feature>
<evidence type="ECO:0000250" key="1"/>
<evidence type="ECO:0000250" key="2">
    <source>
        <dbReference type="UniProtKB" id="Q6P2C8"/>
    </source>
</evidence>
<evidence type="ECO:0000303" key="3">
    <source>
    </source>
</evidence>
<evidence type="ECO:0000305" key="4"/>
<evidence type="ECO:0000312" key="5">
    <source>
        <dbReference type="EMBL" id="AAH16537.1"/>
    </source>
</evidence>
<evidence type="ECO:0000312" key="6">
    <source>
        <dbReference type="EMBL" id="BAB26488.2"/>
    </source>
</evidence>
<evidence type="ECO:0000312" key="7">
    <source>
        <dbReference type="EMBL" id="BAE27743.1"/>
    </source>
</evidence>
<keyword id="KW-0002">3D-structure</keyword>
<keyword id="KW-0010">Activator</keyword>
<keyword id="KW-0025">Alternative splicing</keyword>
<keyword id="KW-0488">Methylation</keyword>
<keyword id="KW-0539">Nucleus</keyword>
<keyword id="KW-0597">Phosphoprotein</keyword>
<keyword id="KW-1185">Reference proteome</keyword>
<keyword id="KW-0804">Transcription</keyword>
<keyword id="KW-0805">Transcription regulation</keyword>
<protein>
    <recommendedName>
        <fullName>Mediator of RNA polymerase II transcription subunit 27</fullName>
    </recommendedName>
    <alternativeName>
        <fullName>Cofactor required for Sp1 transcriptional activation subunit 8</fullName>
        <shortName>CRSP complex subunit 8</shortName>
    </alternativeName>
    <alternativeName>
        <fullName>Mediator complex subunit 27</fullName>
    </alternativeName>
</protein>
<gene>
    <name type="primary">Med27</name>
    <name type="synonym">Crsp8</name>
</gene>